<accession>Q0BHA0</accession>
<sequence length="232" mass="25255">MTNADPHELQKFSDLAHRWWDPNAEFKPLHELNPVRLGWIDAHAHLAGKRALDIGCGGGILSESMAGLGAQVKGIDLSTEALGVADLHSLESGVTVDYEAIAAEALAEREPGTYDVVTCMEMLEHVPSPAGIVSACATLVKPGGWVFFSTLNRNLKSYLFAVIGAEYIARMLPKGTHDYARFIRPSELASFVRGTDLHIVEIKGITYHPIGKRFALSNDTDINYLVACRRGA</sequence>
<feature type="chain" id="PRO_1000013895" description="Ubiquinone biosynthesis O-methyltransferase">
    <location>
        <begin position="1"/>
        <end position="232"/>
    </location>
</feature>
<feature type="binding site" evidence="1">
    <location>
        <position position="36"/>
    </location>
    <ligand>
        <name>S-adenosyl-L-methionine</name>
        <dbReference type="ChEBI" id="CHEBI:59789"/>
    </ligand>
</feature>
<feature type="binding site" evidence="1">
    <location>
        <position position="55"/>
    </location>
    <ligand>
        <name>S-adenosyl-L-methionine</name>
        <dbReference type="ChEBI" id="CHEBI:59789"/>
    </ligand>
</feature>
<feature type="binding site" evidence="1">
    <location>
        <position position="76"/>
    </location>
    <ligand>
        <name>S-adenosyl-L-methionine</name>
        <dbReference type="ChEBI" id="CHEBI:59789"/>
    </ligand>
</feature>
<feature type="binding site" evidence="1">
    <location>
        <position position="120"/>
    </location>
    <ligand>
        <name>S-adenosyl-L-methionine</name>
        <dbReference type="ChEBI" id="CHEBI:59789"/>
    </ligand>
</feature>
<gene>
    <name evidence="1" type="primary">ubiG</name>
    <name type="ordered locus">Bamb_0914</name>
</gene>
<evidence type="ECO:0000255" key="1">
    <source>
        <dbReference type="HAMAP-Rule" id="MF_00472"/>
    </source>
</evidence>
<comment type="function">
    <text evidence="1">O-methyltransferase that catalyzes the 2 O-methylation steps in the ubiquinone biosynthetic pathway.</text>
</comment>
<comment type="catalytic activity">
    <reaction evidence="1">
        <text>a 3-demethylubiquinol + S-adenosyl-L-methionine = a ubiquinol + S-adenosyl-L-homocysteine + H(+)</text>
        <dbReference type="Rhea" id="RHEA:44380"/>
        <dbReference type="Rhea" id="RHEA-COMP:9566"/>
        <dbReference type="Rhea" id="RHEA-COMP:10914"/>
        <dbReference type="ChEBI" id="CHEBI:15378"/>
        <dbReference type="ChEBI" id="CHEBI:17976"/>
        <dbReference type="ChEBI" id="CHEBI:57856"/>
        <dbReference type="ChEBI" id="CHEBI:59789"/>
        <dbReference type="ChEBI" id="CHEBI:84422"/>
        <dbReference type="EC" id="2.1.1.64"/>
    </reaction>
</comment>
<comment type="catalytic activity">
    <reaction evidence="1">
        <text>a 3-(all-trans-polyprenyl)benzene-1,2-diol + S-adenosyl-L-methionine = a 2-methoxy-6-(all-trans-polyprenyl)phenol + S-adenosyl-L-homocysteine + H(+)</text>
        <dbReference type="Rhea" id="RHEA:31411"/>
        <dbReference type="Rhea" id="RHEA-COMP:9550"/>
        <dbReference type="Rhea" id="RHEA-COMP:9551"/>
        <dbReference type="ChEBI" id="CHEBI:15378"/>
        <dbReference type="ChEBI" id="CHEBI:57856"/>
        <dbReference type="ChEBI" id="CHEBI:59789"/>
        <dbReference type="ChEBI" id="CHEBI:62729"/>
        <dbReference type="ChEBI" id="CHEBI:62731"/>
        <dbReference type="EC" id="2.1.1.222"/>
    </reaction>
</comment>
<comment type="pathway">
    <text evidence="1">Cofactor biosynthesis; ubiquinone biosynthesis.</text>
</comment>
<comment type="similarity">
    <text evidence="1">Belongs to the methyltransferase superfamily. UbiG/COQ3 family.</text>
</comment>
<reference key="1">
    <citation type="submission" date="2006-08" db="EMBL/GenBank/DDBJ databases">
        <title>Complete sequence of chromosome 1 of Burkholderia cepacia AMMD.</title>
        <authorList>
            <person name="Copeland A."/>
            <person name="Lucas S."/>
            <person name="Lapidus A."/>
            <person name="Barry K."/>
            <person name="Detter J.C."/>
            <person name="Glavina del Rio T."/>
            <person name="Hammon N."/>
            <person name="Israni S."/>
            <person name="Pitluck S."/>
            <person name="Bruce D."/>
            <person name="Chain P."/>
            <person name="Malfatti S."/>
            <person name="Shin M."/>
            <person name="Vergez L."/>
            <person name="Schmutz J."/>
            <person name="Larimer F."/>
            <person name="Land M."/>
            <person name="Hauser L."/>
            <person name="Kyrpides N."/>
            <person name="Kim E."/>
            <person name="Parke J."/>
            <person name="Coenye T."/>
            <person name="Konstantinidis K."/>
            <person name="Ramette A."/>
            <person name="Tiedje J."/>
            <person name="Richardson P."/>
        </authorList>
    </citation>
    <scope>NUCLEOTIDE SEQUENCE [LARGE SCALE GENOMIC DNA]</scope>
    <source>
        <strain>ATCC BAA-244 / DSM 16087 / CCUG 44356 / LMG 19182 / AMMD</strain>
    </source>
</reference>
<protein>
    <recommendedName>
        <fullName evidence="1">Ubiquinone biosynthesis O-methyltransferase</fullName>
    </recommendedName>
    <alternativeName>
        <fullName evidence="1">2-polyprenyl-6-hydroxyphenol methylase</fullName>
        <ecNumber evidence="1">2.1.1.222</ecNumber>
    </alternativeName>
    <alternativeName>
        <fullName evidence="1">3-demethylubiquinone 3-O-methyltransferase</fullName>
        <ecNumber evidence="1">2.1.1.64</ecNumber>
    </alternativeName>
</protein>
<organism>
    <name type="scientific">Burkholderia ambifaria (strain ATCC BAA-244 / DSM 16087 / CCUG 44356 / LMG 19182 / AMMD)</name>
    <name type="common">Burkholderia cepacia (strain AMMD)</name>
    <dbReference type="NCBI Taxonomy" id="339670"/>
    <lineage>
        <taxon>Bacteria</taxon>
        <taxon>Pseudomonadati</taxon>
        <taxon>Pseudomonadota</taxon>
        <taxon>Betaproteobacteria</taxon>
        <taxon>Burkholderiales</taxon>
        <taxon>Burkholderiaceae</taxon>
        <taxon>Burkholderia</taxon>
        <taxon>Burkholderia cepacia complex</taxon>
    </lineage>
</organism>
<name>UBIG_BURCM</name>
<dbReference type="EC" id="2.1.1.222" evidence="1"/>
<dbReference type="EC" id="2.1.1.64" evidence="1"/>
<dbReference type="EMBL" id="CP000440">
    <property type="protein sequence ID" value="ABI86473.1"/>
    <property type="molecule type" value="Genomic_DNA"/>
</dbReference>
<dbReference type="RefSeq" id="WP_011656273.1">
    <property type="nucleotide sequence ID" value="NZ_CP009798.1"/>
</dbReference>
<dbReference type="SMR" id="Q0BHA0"/>
<dbReference type="GeneID" id="93083677"/>
<dbReference type="KEGG" id="bam:Bamb_0914"/>
<dbReference type="PATRIC" id="fig|339670.21.peg.662"/>
<dbReference type="eggNOG" id="COG2227">
    <property type="taxonomic scope" value="Bacteria"/>
</dbReference>
<dbReference type="UniPathway" id="UPA00232"/>
<dbReference type="Proteomes" id="UP000000662">
    <property type="component" value="Chromosome 1"/>
</dbReference>
<dbReference type="GO" id="GO:0102208">
    <property type="term" value="F:2-polyprenyl-6-hydroxyphenol methylase activity"/>
    <property type="evidence" value="ECO:0007669"/>
    <property type="project" value="UniProtKB-EC"/>
</dbReference>
<dbReference type="GO" id="GO:0061542">
    <property type="term" value="F:3-demethylubiquinol 3-O-methyltransferase activity"/>
    <property type="evidence" value="ECO:0007669"/>
    <property type="project" value="UniProtKB-UniRule"/>
</dbReference>
<dbReference type="GO" id="GO:0010420">
    <property type="term" value="F:polyprenyldihydroxybenzoate methyltransferase activity"/>
    <property type="evidence" value="ECO:0007669"/>
    <property type="project" value="InterPro"/>
</dbReference>
<dbReference type="GO" id="GO:0032259">
    <property type="term" value="P:methylation"/>
    <property type="evidence" value="ECO:0007669"/>
    <property type="project" value="UniProtKB-KW"/>
</dbReference>
<dbReference type="CDD" id="cd02440">
    <property type="entry name" value="AdoMet_MTases"/>
    <property type="match status" value="1"/>
</dbReference>
<dbReference type="FunFam" id="3.40.50.150:FF:000028">
    <property type="entry name" value="Ubiquinone biosynthesis O-methyltransferase"/>
    <property type="match status" value="1"/>
</dbReference>
<dbReference type="Gene3D" id="3.40.50.150">
    <property type="entry name" value="Vaccinia Virus protein VP39"/>
    <property type="match status" value="1"/>
</dbReference>
<dbReference type="HAMAP" id="MF_00472">
    <property type="entry name" value="UbiG"/>
    <property type="match status" value="1"/>
</dbReference>
<dbReference type="InterPro" id="IPR029063">
    <property type="entry name" value="SAM-dependent_MTases_sf"/>
</dbReference>
<dbReference type="InterPro" id="IPR010233">
    <property type="entry name" value="UbiG_MeTrfase"/>
</dbReference>
<dbReference type="NCBIfam" id="TIGR01983">
    <property type="entry name" value="UbiG"/>
    <property type="match status" value="1"/>
</dbReference>
<dbReference type="PANTHER" id="PTHR43464">
    <property type="entry name" value="METHYLTRANSFERASE"/>
    <property type="match status" value="1"/>
</dbReference>
<dbReference type="PANTHER" id="PTHR43464:SF19">
    <property type="entry name" value="UBIQUINONE BIOSYNTHESIS O-METHYLTRANSFERASE, MITOCHONDRIAL"/>
    <property type="match status" value="1"/>
</dbReference>
<dbReference type="Pfam" id="PF13489">
    <property type="entry name" value="Methyltransf_23"/>
    <property type="match status" value="1"/>
</dbReference>
<dbReference type="SUPFAM" id="SSF53335">
    <property type="entry name" value="S-adenosyl-L-methionine-dependent methyltransferases"/>
    <property type="match status" value="1"/>
</dbReference>
<keyword id="KW-0489">Methyltransferase</keyword>
<keyword id="KW-0949">S-adenosyl-L-methionine</keyword>
<keyword id="KW-0808">Transferase</keyword>
<keyword id="KW-0831">Ubiquinone biosynthesis</keyword>
<proteinExistence type="inferred from homology"/>